<name>HISX_PSEPK</name>
<protein>
    <recommendedName>
        <fullName evidence="1">Histidinol dehydrogenase</fullName>
        <shortName evidence="1">HDH</shortName>
        <ecNumber evidence="1">1.1.1.23</ecNumber>
    </recommendedName>
</protein>
<organism>
    <name type="scientific">Pseudomonas putida (strain ATCC 47054 / DSM 6125 / CFBP 8728 / NCIMB 11950 / KT2440)</name>
    <dbReference type="NCBI Taxonomy" id="160488"/>
    <lineage>
        <taxon>Bacteria</taxon>
        <taxon>Pseudomonadati</taxon>
        <taxon>Pseudomonadota</taxon>
        <taxon>Gammaproteobacteria</taxon>
        <taxon>Pseudomonadales</taxon>
        <taxon>Pseudomonadaceae</taxon>
        <taxon>Pseudomonas</taxon>
    </lineage>
</organism>
<keyword id="KW-0028">Amino-acid biosynthesis</keyword>
<keyword id="KW-0368">Histidine biosynthesis</keyword>
<keyword id="KW-0479">Metal-binding</keyword>
<keyword id="KW-0520">NAD</keyword>
<keyword id="KW-0560">Oxidoreductase</keyword>
<keyword id="KW-1185">Reference proteome</keyword>
<keyword id="KW-0862">Zinc</keyword>
<dbReference type="EC" id="1.1.1.23" evidence="1"/>
<dbReference type="EMBL" id="AE015451">
    <property type="protein sequence ID" value="AAN66591.1"/>
    <property type="molecule type" value="Genomic_DNA"/>
</dbReference>
<dbReference type="RefSeq" id="NP_743127.1">
    <property type="nucleotide sequence ID" value="NC_002947.4"/>
</dbReference>
<dbReference type="RefSeq" id="WP_010952156.1">
    <property type="nucleotide sequence ID" value="NZ_CP169744.1"/>
</dbReference>
<dbReference type="SMR" id="P59400"/>
<dbReference type="STRING" id="160488.PP_0966"/>
<dbReference type="PaxDb" id="160488-PP_0966"/>
<dbReference type="GeneID" id="83678319"/>
<dbReference type="KEGG" id="ppu:PP_0966"/>
<dbReference type="PATRIC" id="fig|160488.4.peg.1028"/>
<dbReference type="eggNOG" id="COG0141">
    <property type="taxonomic scope" value="Bacteria"/>
</dbReference>
<dbReference type="HOGENOM" id="CLU_006732_3_3_6"/>
<dbReference type="OrthoDB" id="9805269at2"/>
<dbReference type="PhylomeDB" id="P59400"/>
<dbReference type="BioCyc" id="PPUT160488:G1G01-1040-MONOMER"/>
<dbReference type="UniPathway" id="UPA00031">
    <property type="reaction ID" value="UER00014"/>
</dbReference>
<dbReference type="Proteomes" id="UP000000556">
    <property type="component" value="Chromosome"/>
</dbReference>
<dbReference type="GO" id="GO:0005829">
    <property type="term" value="C:cytosol"/>
    <property type="evidence" value="ECO:0007669"/>
    <property type="project" value="TreeGrafter"/>
</dbReference>
<dbReference type="GO" id="GO:0004399">
    <property type="term" value="F:histidinol dehydrogenase activity"/>
    <property type="evidence" value="ECO:0007669"/>
    <property type="project" value="UniProtKB-UniRule"/>
</dbReference>
<dbReference type="GO" id="GO:0051287">
    <property type="term" value="F:NAD binding"/>
    <property type="evidence" value="ECO:0007669"/>
    <property type="project" value="InterPro"/>
</dbReference>
<dbReference type="GO" id="GO:0008270">
    <property type="term" value="F:zinc ion binding"/>
    <property type="evidence" value="ECO:0007669"/>
    <property type="project" value="UniProtKB-UniRule"/>
</dbReference>
<dbReference type="GO" id="GO:0000105">
    <property type="term" value="P:L-histidine biosynthetic process"/>
    <property type="evidence" value="ECO:0007669"/>
    <property type="project" value="UniProtKB-UniRule"/>
</dbReference>
<dbReference type="CDD" id="cd06572">
    <property type="entry name" value="Histidinol_dh"/>
    <property type="match status" value="1"/>
</dbReference>
<dbReference type="FunFam" id="3.40.50.1980:FF:000004">
    <property type="entry name" value="Histidinol dehydrogenase"/>
    <property type="match status" value="1"/>
</dbReference>
<dbReference type="FunFam" id="3.40.50.1980:FF:000010">
    <property type="entry name" value="Histidinol dehydrogenase"/>
    <property type="match status" value="1"/>
</dbReference>
<dbReference type="FunFam" id="1.20.5.1300:FF:000002">
    <property type="entry name" value="Histidinol dehydrogenase, chloroplastic"/>
    <property type="match status" value="1"/>
</dbReference>
<dbReference type="Gene3D" id="1.20.5.1300">
    <property type="match status" value="1"/>
</dbReference>
<dbReference type="Gene3D" id="3.40.50.1980">
    <property type="entry name" value="Nitrogenase molybdenum iron protein domain"/>
    <property type="match status" value="2"/>
</dbReference>
<dbReference type="HAMAP" id="MF_01024">
    <property type="entry name" value="HisD"/>
    <property type="match status" value="1"/>
</dbReference>
<dbReference type="InterPro" id="IPR016161">
    <property type="entry name" value="Ald_DH/histidinol_DH"/>
</dbReference>
<dbReference type="InterPro" id="IPR001692">
    <property type="entry name" value="Histidinol_DH_CS"/>
</dbReference>
<dbReference type="InterPro" id="IPR022695">
    <property type="entry name" value="Histidinol_DH_monofunct"/>
</dbReference>
<dbReference type="InterPro" id="IPR012131">
    <property type="entry name" value="Hstdl_DH"/>
</dbReference>
<dbReference type="NCBIfam" id="TIGR00069">
    <property type="entry name" value="hisD"/>
    <property type="match status" value="1"/>
</dbReference>
<dbReference type="PANTHER" id="PTHR21256:SF2">
    <property type="entry name" value="HISTIDINE BIOSYNTHESIS TRIFUNCTIONAL PROTEIN"/>
    <property type="match status" value="1"/>
</dbReference>
<dbReference type="PANTHER" id="PTHR21256">
    <property type="entry name" value="HISTIDINOL DEHYDROGENASE HDH"/>
    <property type="match status" value="1"/>
</dbReference>
<dbReference type="Pfam" id="PF00815">
    <property type="entry name" value="Histidinol_dh"/>
    <property type="match status" value="1"/>
</dbReference>
<dbReference type="PIRSF" id="PIRSF000099">
    <property type="entry name" value="Histidinol_dh"/>
    <property type="match status" value="1"/>
</dbReference>
<dbReference type="PRINTS" id="PR00083">
    <property type="entry name" value="HOLDHDRGNASE"/>
</dbReference>
<dbReference type="SUPFAM" id="SSF53720">
    <property type="entry name" value="ALDH-like"/>
    <property type="match status" value="1"/>
</dbReference>
<dbReference type="PROSITE" id="PS00611">
    <property type="entry name" value="HISOL_DEHYDROGENASE"/>
    <property type="match status" value="1"/>
</dbReference>
<proteinExistence type="inferred from homology"/>
<gene>
    <name evidence="1" type="primary">hisD</name>
    <name type="ordered locus">PP_0966</name>
</gene>
<feature type="chain" id="PRO_0000135821" description="Histidinol dehydrogenase">
    <location>
        <begin position="1"/>
        <end position="441"/>
    </location>
</feature>
<feature type="active site" description="Proton acceptor" evidence="1">
    <location>
        <position position="333"/>
    </location>
</feature>
<feature type="active site" description="Proton acceptor" evidence="1">
    <location>
        <position position="334"/>
    </location>
</feature>
<feature type="binding site" evidence="1">
    <location>
        <position position="136"/>
    </location>
    <ligand>
        <name>NAD(+)</name>
        <dbReference type="ChEBI" id="CHEBI:57540"/>
    </ligand>
</feature>
<feature type="binding site" evidence="1">
    <location>
        <position position="197"/>
    </location>
    <ligand>
        <name>NAD(+)</name>
        <dbReference type="ChEBI" id="CHEBI:57540"/>
    </ligand>
</feature>
<feature type="binding site" evidence="1">
    <location>
        <position position="220"/>
    </location>
    <ligand>
        <name>NAD(+)</name>
        <dbReference type="ChEBI" id="CHEBI:57540"/>
    </ligand>
</feature>
<feature type="binding site" evidence="1">
    <location>
        <position position="243"/>
    </location>
    <ligand>
        <name>substrate</name>
    </ligand>
</feature>
<feature type="binding site" evidence="1">
    <location>
        <position position="265"/>
    </location>
    <ligand>
        <name>substrate</name>
    </ligand>
</feature>
<feature type="binding site" evidence="1">
    <location>
        <position position="265"/>
    </location>
    <ligand>
        <name>Zn(2+)</name>
        <dbReference type="ChEBI" id="CHEBI:29105"/>
    </ligand>
</feature>
<feature type="binding site" evidence="1">
    <location>
        <position position="268"/>
    </location>
    <ligand>
        <name>substrate</name>
    </ligand>
</feature>
<feature type="binding site" evidence="1">
    <location>
        <position position="268"/>
    </location>
    <ligand>
        <name>Zn(2+)</name>
        <dbReference type="ChEBI" id="CHEBI:29105"/>
    </ligand>
</feature>
<feature type="binding site" evidence="1">
    <location>
        <position position="334"/>
    </location>
    <ligand>
        <name>substrate</name>
    </ligand>
</feature>
<feature type="binding site" evidence="1">
    <location>
        <position position="367"/>
    </location>
    <ligand>
        <name>substrate</name>
    </ligand>
</feature>
<feature type="binding site" evidence="1">
    <location>
        <position position="367"/>
    </location>
    <ligand>
        <name>Zn(2+)</name>
        <dbReference type="ChEBI" id="CHEBI:29105"/>
    </ligand>
</feature>
<feature type="binding site" evidence="1">
    <location>
        <position position="421"/>
    </location>
    <ligand>
        <name>substrate</name>
    </ligand>
</feature>
<feature type="binding site" evidence="1">
    <location>
        <position position="426"/>
    </location>
    <ligand>
        <name>substrate</name>
    </ligand>
</feature>
<feature type="binding site" evidence="1">
    <location>
        <position position="426"/>
    </location>
    <ligand>
        <name>Zn(2+)</name>
        <dbReference type="ChEBI" id="CHEBI:29105"/>
    </ligand>
</feature>
<evidence type="ECO:0000255" key="1">
    <source>
        <dbReference type="HAMAP-Rule" id="MF_01024"/>
    </source>
</evidence>
<comment type="function">
    <text evidence="1">Catalyzes the sequential NAD-dependent oxidations of L-histidinol to L-histidinaldehyde and then to L-histidine.</text>
</comment>
<comment type="catalytic activity">
    <reaction evidence="1">
        <text>L-histidinol + 2 NAD(+) + H2O = L-histidine + 2 NADH + 3 H(+)</text>
        <dbReference type="Rhea" id="RHEA:20641"/>
        <dbReference type="ChEBI" id="CHEBI:15377"/>
        <dbReference type="ChEBI" id="CHEBI:15378"/>
        <dbReference type="ChEBI" id="CHEBI:57540"/>
        <dbReference type="ChEBI" id="CHEBI:57595"/>
        <dbReference type="ChEBI" id="CHEBI:57699"/>
        <dbReference type="ChEBI" id="CHEBI:57945"/>
        <dbReference type="EC" id="1.1.1.23"/>
    </reaction>
</comment>
<comment type="cofactor">
    <cofactor evidence="1">
        <name>Zn(2+)</name>
        <dbReference type="ChEBI" id="CHEBI:29105"/>
    </cofactor>
    <text evidence="1">Binds 1 zinc ion per subunit.</text>
</comment>
<comment type="pathway">
    <text evidence="1">Amino-acid biosynthesis; L-histidine biosynthesis; L-histidine from 5-phospho-alpha-D-ribose 1-diphosphate: step 9/9.</text>
</comment>
<comment type="similarity">
    <text evidence="1">Belongs to the histidinol dehydrogenase family.</text>
</comment>
<reference key="1">
    <citation type="journal article" date="2002" name="Environ. Microbiol.">
        <title>Complete genome sequence and comparative analysis of the metabolically versatile Pseudomonas putida KT2440.</title>
        <authorList>
            <person name="Nelson K.E."/>
            <person name="Weinel C."/>
            <person name="Paulsen I.T."/>
            <person name="Dodson R.J."/>
            <person name="Hilbert H."/>
            <person name="Martins dos Santos V.A.P."/>
            <person name="Fouts D.E."/>
            <person name="Gill S.R."/>
            <person name="Pop M."/>
            <person name="Holmes M."/>
            <person name="Brinkac L.M."/>
            <person name="Beanan M.J."/>
            <person name="DeBoy R.T."/>
            <person name="Daugherty S.C."/>
            <person name="Kolonay J.F."/>
            <person name="Madupu R."/>
            <person name="Nelson W.C."/>
            <person name="White O."/>
            <person name="Peterson J.D."/>
            <person name="Khouri H.M."/>
            <person name="Hance I."/>
            <person name="Chris Lee P."/>
            <person name="Holtzapple E.K."/>
            <person name="Scanlan D."/>
            <person name="Tran K."/>
            <person name="Moazzez A."/>
            <person name="Utterback T.R."/>
            <person name="Rizzo M."/>
            <person name="Lee K."/>
            <person name="Kosack D."/>
            <person name="Moestl D."/>
            <person name="Wedler H."/>
            <person name="Lauber J."/>
            <person name="Stjepandic D."/>
            <person name="Hoheisel J."/>
            <person name="Straetz M."/>
            <person name="Heim S."/>
            <person name="Kiewitz C."/>
            <person name="Eisen J.A."/>
            <person name="Timmis K.N."/>
            <person name="Duesterhoeft A."/>
            <person name="Tuemmler B."/>
            <person name="Fraser C.M."/>
        </authorList>
    </citation>
    <scope>NUCLEOTIDE SEQUENCE [LARGE SCALE GENOMIC DNA]</scope>
    <source>
        <strain>ATCC 47054 / DSM 6125 / CFBP 8728 / NCIMB 11950 / KT2440</strain>
    </source>
</reference>
<sequence>MTVSTAIARLNAADPDFARHLDHLLSWESVSDDAVNQRVLDIIKAVRERGDAALVEFTQRFDGVDAKSIDDLILDRARLELALTRITPVQREALEKAANRVRIYHERQKQDSWQYTEADGTVLGQKVTPLDRAGLYVPGGKASYPSSVLMNAIPAKVAGVTEVVMVVPTPRGEVNELVLAAACIAGVDRVFTVGGAQAVAALAYGTESVPQVDKIVGPGNIYVATAKRHVFGQVGIDMIAGPSEILVVCDGQTDPDWIAMDLFSQAEHDEDAQAILVSPDAAFLDRVAASIDKLMPTMERADIIEKSINGRGALIQVRDMQQAMDVANRIAPEHLELSVADPQAWLPHIRHAGAIFMGRHTSEALGDYCAGPNHVLPTSGTARFSSPLGVYDFQKRSSIIFCSEQGASELGHTASVLARGESLTAHARSAEYRILTQEKGN</sequence>
<accession>P59400</accession>